<organism>
    <name type="scientific">Chlamydomonas reinhardtii</name>
    <name type="common">Chlamydomonas smithii</name>
    <dbReference type="NCBI Taxonomy" id="3055"/>
    <lineage>
        <taxon>Eukaryota</taxon>
        <taxon>Viridiplantae</taxon>
        <taxon>Chlorophyta</taxon>
        <taxon>core chlorophytes</taxon>
        <taxon>Chlorophyceae</taxon>
        <taxon>CS clade</taxon>
        <taxon>Chlamydomonadales</taxon>
        <taxon>Chlamydomonadaceae</taxon>
        <taxon>Chlamydomonas</taxon>
    </lineage>
</organism>
<feature type="chain" id="PRO_0000123347" description="Small ribosomal subunit protein uS11">
    <location>
        <begin position="1"/>
        <end position="153"/>
    </location>
</feature>
<feature type="sequence variant">
    <original>L</original>
    <variation>P</variation>
    <location>
        <position position="153"/>
    </location>
</feature>
<accession>P46295</accession>
<name>RS14_CHLRE</name>
<gene>
    <name type="primary">RPS14</name>
    <name type="synonym">CRY1</name>
</gene>
<evidence type="ECO:0000305" key="1"/>
<keyword id="KW-0687">Ribonucleoprotein</keyword>
<keyword id="KW-0689">Ribosomal protein</keyword>
<comment type="similarity">
    <text evidence="1">Belongs to the universal ribosomal protein uS11 family.</text>
</comment>
<sequence length="153" mass="16302">MAPKKAAKGDEAPKEVVSLGPTVREGEHVFGVAHIFASFNDTFVHVTDLSGRETISRVTGGMKVKADRDESSPYAAMLAAQDVAQKCKELGITALHIKLRATGGNRTKTPGPGAQSALRALARAGMKIGRIEDVTPIPTDSTRRKGGRRGRRL</sequence>
<reference key="1">
    <citation type="journal article" date="1994" name="Mol. Cell. Biol.">
        <title>The CRY1 gene in Chlamydomonas reinhardtii: structure and use as a dominant selectable marker for nuclear transformation.</title>
        <authorList>
            <person name="Nelson J.A.E."/>
            <person name="Savereide P.B."/>
            <person name="Lefebvre P.A."/>
        </authorList>
    </citation>
    <scope>NUCLEOTIDE SEQUENCE</scope>
    <source>
        <strain>21gr / CC-1690</strain>
    </source>
</reference>
<proteinExistence type="inferred from homology"/>
<dbReference type="EMBL" id="U06937">
    <property type="protein sequence ID" value="AAB60274.1"/>
    <property type="molecule type" value="Unassigned_DNA"/>
</dbReference>
<dbReference type="PIR" id="A56064">
    <property type="entry name" value="A56064"/>
</dbReference>
<dbReference type="RefSeq" id="XP_001697388.1">
    <property type="nucleotide sequence ID" value="XM_001697336.1"/>
</dbReference>
<dbReference type="SMR" id="P46295"/>
<dbReference type="PaxDb" id="3055-EDP00328"/>
<dbReference type="ProMEX" id="P46295"/>
<dbReference type="EnsemblPlants" id="PNW76888">
    <property type="protein sequence ID" value="PNW76888"/>
    <property type="gene ID" value="CHLRE_11g480150v5"/>
</dbReference>
<dbReference type="Gramene" id="PNW76888">
    <property type="protein sequence ID" value="PNW76888"/>
    <property type="gene ID" value="CHLRE_11g480150v5"/>
</dbReference>
<dbReference type="KEGG" id="cre:CHLRE_11g480150v5"/>
<dbReference type="eggNOG" id="KOG0407">
    <property type="taxonomic scope" value="Eukaryota"/>
</dbReference>
<dbReference type="HOGENOM" id="CLU_072439_6_0_1"/>
<dbReference type="OMA" id="KWGVAHI"/>
<dbReference type="OrthoDB" id="1677536at2759"/>
<dbReference type="GO" id="GO:1990904">
    <property type="term" value="C:ribonucleoprotein complex"/>
    <property type="evidence" value="ECO:0007669"/>
    <property type="project" value="UniProtKB-KW"/>
</dbReference>
<dbReference type="GO" id="GO:0005840">
    <property type="term" value="C:ribosome"/>
    <property type="evidence" value="ECO:0007669"/>
    <property type="project" value="UniProtKB-KW"/>
</dbReference>
<dbReference type="GO" id="GO:0003735">
    <property type="term" value="F:structural constituent of ribosome"/>
    <property type="evidence" value="ECO:0007669"/>
    <property type="project" value="InterPro"/>
</dbReference>
<dbReference type="GO" id="GO:0006412">
    <property type="term" value="P:translation"/>
    <property type="evidence" value="ECO:0007669"/>
    <property type="project" value="InterPro"/>
</dbReference>
<dbReference type="FunFam" id="3.30.420.80:FF:000002">
    <property type="entry name" value="40S ribosomal protein S14"/>
    <property type="match status" value="1"/>
</dbReference>
<dbReference type="Gene3D" id="3.30.420.80">
    <property type="entry name" value="Ribosomal protein S11"/>
    <property type="match status" value="1"/>
</dbReference>
<dbReference type="HAMAP" id="MF_01310">
    <property type="entry name" value="Ribosomal_uS11"/>
    <property type="match status" value="1"/>
</dbReference>
<dbReference type="InterPro" id="IPR001971">
    <property type="entry name" value="Ribosomal_uS11"/>
</dbReference>
<dbReference type="InterPro" id="IPR018102">
    <property type="entry name" value="Ribosomal_uS11_CS"/>
</dbReference>
<dbReference type="InterPro" id="IPR036967">
    <property type="entry name" value="Ribosomal_uS11_sf"/>
</dbReference>
<dbReference type="NCBIfam" id="NF007176">
    <property type="entry name" value="PRK09607.1"/>
    <property type="match status" value="1"/>
</dbReference>
<dbReference type="PANTHER" id="PTHR11759">
    <property type="entry name" value="40S RIBOSOMAL PROTEIN S14/30S RIBOSOMAL PROTEIN S11"/>
    <property type="match status" value="1"/>
</dbReference>
<dbReference type="Pfam" id="PF00411">
    <property type="entry name" value="Ribosomal_S11"/>
    <property type="match status" value="1"/>
</dbReference>
<dbReference type="PIRSF" id="PIRSF002131">
    <property type="entry name" value="Ribosomal_S11"/>
    <property type="match status" value="1"/>
</dbReference>
<dbReference type="SUPFAM" id="SSF53137">
    <property type="entry name" value="Translational machinery components"/>
    <property type="match status" value="1"/>
</dbReference>
<dbReference type="PROSITE" id="PS00054">
    <property type="entry name" value="RIBOSOMAL_S11"/>
    <property type="match status" value="1"/>
</dbReference>
<protein>
    <recommendedName>
        <fullName evidence="1">Small ribosomal subunit protein uS11</fullName>
    </recommendedName>
    <alternativeName>
        <fullName>40S ribosomal protein S14</fullName>
    </alternativeName>
</protein>